<comment type="similarity">
    <text evidence="2">Belongs to the UPF0507 family.</text>
</comment>
<proteinExistence type="inferred from homology"/>
<sequence length="1260" mass="145720">MGQHQRTSSTHLPILYNHLLNCIFNNPHYNKSPFKNVVEELRTKHNQYTIIVPSAFVLNEFYDPATEGSSNRVLLKELCYNNEEFIKSHIIQTGSPVSSTITPISKEQLVIYKTMDNKQVLLKNRMIYTGKGFRRSLKLKILAVSYFRSFCDYFPKGSQFMLVHIESTLFGGQPYIKSSLPLAPILNVNDSSTASKSNSLTLESINNKIKNESVTFEKLLRNFPLLARAVGDKFNRLFHHNNHQFYGLRSNTRKKLEHIKIEFHKILDEAFKIILDSVKEERPNGEATYNLINHIISIHPNLNLDKLVHEYVELNLYDVLWSQLIYQYNYPNDDKADYDPSATKVMTSAKYEQLSCLSLNQLDVPLNKPWQLNELHHRIYQAVQELKKLSTSSTTTSTLAAKMQIIYNTINILTNPSQHAPMAPDLVIDADTLMALLIMTIVHAKVDNFEAHLFYIESFSASDVVCDGHFSYIMSTLDAVICHLSDNDKGLNTLIQSSQQNLELWSAIFELDLVSITKIVESFKNAALLPEQHCLKSRNISGEGALTFALKANNYDVYKLLLDGNPNWFTIDDILYEKNVVTNQNLLMCALLEETKEQIVLDLLETITENATVKEQQAYYNMQDLSGRSIGHYLFHNMSLISKIGHLIDWELRDRNTHTPLFSLCRCYDHPEYIELVQAGFEAVYLQLDKMRNNHNQNICSNGTKIETDACKDARDGIHINNDNSSRGIDFEKHIDKNGNTLLHVILKGIPETRILSRELNLIDVNISNYRHLTPLMLYVKYGRLENLESILADNRLDFLAEDPSTHYNIFDYLSFLAGRYAKENVEKIEKKLIEFYFSHYFPFEAHYKLVALNGKYDPSTRDWYIYYRAEDQKALRPKSLNSLKHILYLEKLQRPFTTFIDSDIFWRNYATNISTTPMFHKLRVNSLIHRLNILFQSVACQNIGDSRANDLFNRFLTNDEDELVLELKKKITDLLELKKLKLGEVKLKVGQVQEIEYFLDYCLDEMRRAIQIFSKLSKVAIIGEQKQIDVQNVENSLLYRFDVERFFQPFKTLTENETLVRVSGSLGNFGDYLVWIELAGKELLKNIFKISADIQTWKDLYHAIYTINRDLRSMEYPTGSLPTASSNAKETDPKALLREGGNTLSRTPTNSSDYTACNFDVPNTVVDDNEGIFNLLASSKRSKYKKLVVARADLVKQIMKLNVDIKWLHEIIATELSQFIKFRGRFLEFSTKLFVNEEMRSLRKRKLELEKFLYKVKNS</sequence>
<protein>
    <recommendedName>
        <fullName>UPF0507 protein LELG_01076</fullName>
    </recommendedName>
</protein>
<feature type="chain" id="PRO_0000311654" description="UPF0507 protein LELG_01076">
    <location>
        <begin position="1"/>
        <end position="1260"/>
    </location>
</feature>
<feature type="domain" description="VPS9" evidence="1">
    <location>
        <begin position="336"/>
        <end position="493"/>
    </location>
</feature>
<accession>A5DUP0</accession>
<name>U507_LODEL</name>
<organism>
    <name type="scientific">Lodderomyces elongisporus (strain ATCC 11503 / CBS 2605 / JCM 1781 / NBRC 1676 / NRRL YB-4239)</name>
    <name type="common">Yeast</name>
    <name type="synonym">Saccharomyces elongisporus</name>
    <dbReference type="NCBI Taxonomy" id="379508"/>
    <lineage>
        <taxon>Eukaryota</taxon>
        <taxon>Fungi</taxon>
        <taxon>Dikarya</taxon>
        <taxon>Ascomycota</taxon>
        <taxon>Saccharomycotina</taxon>
        <taxon>Pichiomycetes</taxon>
        <taxon>Debaryomycetaceae</taxon>
        <taxon>Candida/Lodderomyces clade</taxon>
        <taxon>Lodderomyces</taxon>
    </lineage>
</organism>
<keyword id="KW-1185">Reference proteome</keyword>
<gene>
    <name type="ORF">LELG_01076</name>
</gene>
<dbReference type="EMBL" id="CH981524">
    <property type="protein sequence ID" value="EDK42898.1"/>
    <property type="molecule type" value="Genomic_DNA"/>
</dbReference>
<dbReference type="RefSeq" id="XP_001528556.1">
    <property type="nucleotide sequence ID" value="XM_001528506.1"/>
</dbReference>
<dbReference type="SMR" id="A5DUP0"/>
<dbReference type="FunCoup" id="A5DUP0">
    <property type="interactions" value="10"/>
</dbReference>
<dbReference type="STRING" id="379508.A5DUP0"/>
<dbReference type="GeneID" id="5235710"/>
<dbReference type="KEGG" id="lel:PVL30_001041"/>
<dbReference type="VEuPathDB" id="FungiDB:LELG_01076"/>
<dbReference type="eggNOG" id="ENOG502R3ZQ">
    <property type="taxonomic scope" value="Eukaryota"/>
</dbReference>
<dbReference type="HOGENOM" id="CLU_008912_0_0_1"/>
<dbReference type="InParanoid" id="A5DUP0"/>
<dbReference type="OMA" id="LNCIFNN"/>
<dbReference type="OrthoDB" id="7464126at2759"/>
<dbReference type="Proteomes" id="UP000001996">
    <property type="component" value="Unassembled WGS sequence"/>
</dbReference>
<dbReference type="GO" id="GO:0005769">
    <property type="term" value="C:early endosome"/>
    <property type="evidence" value="ECO:0007669"/>
    <property type="project" value="TreeGrafter"/>
</dbReference>
<dbReference type="GO" id="GO:0005770">
    <property type="term" value="C:late endosome"/>
    <property type="evidence" value="ECO:0007669"/>
    <property type="project" value="TreeGrafter"/>
</dbReference>
<dbReference type="GO" id="GO:0005886">
    <property type="term" value="C:plasma membrane"/>
    <property type="evidence" value="ECO:0007669"/>
    <property type="project" value="TreeGrafter"/>
</dbReference>
<dbReference type="GO" id="GO:0030133">
    <property type="term" value="C:transport vesicle"/>
    <property type="evidence" value="ECO:0007669"/>
    <property type="project" value="TreeGrafter"/>
</dbReference>
<dbReference type="GO" id="GO:0097422">
    <property type="term" value="C:tubular endosome"/>
    <property type="evidence" value="ECO:0007669"/>
    <property type="project" value="TreeGrafter"/>
</dbReference>
<dbReference type="GO" id="GO:0005085">
    <property type="term" value="F:guanyl-nucleotide exchange factor activity"/>
    <property type="evidence" value="ECO:0007669"/>
    <property type="project" value="TreeGrafter"/>
</dbReference>
<dbReference type="GO" id="GO:0000149">
    <property type="term" value="F:SNARE binding"/>
    <property type="evidence" value="ECO:0007669"/>
    <property type="project" value="TreeGrafter"/>
</dbReference>
<dbReference type="GO" id="GO:0045022">
    <property type="term" value="P:early endosome to late endosome transport"/>
    <property type="evidence" value="ECO:0007669"/>
    <property type="project" value="TreeGrafter"/>
</dbReference>
<dbReference type="Gene3D" id="1.25.40.20">
    <property type="entry name" value="Ankyrin repeat-containing domain"/>
    <property type="match status" value="1"/>
</dbReference>
<dbReference type="Gene3D" id="1.20.1050.80">
    <property type="entry name" value="VPS9 domain"/>
    <property type="match status" value="1"/>
</dbReference>
<dbReference type="InterPro" id="IPR036770">
    <property type="entry name" value="Ankyrin_rpt-contain_sf"/>
</dbReference>
<dbReference type="InterPro" id="IPR051248">
    <property type="entry name" value="UPF0507/Ank_repeat_27"/>
</dbReference>
<dbReference type="InterPro" id="IPR003123">
    <property type="entry name" value="VPS9"/>
</dbReference>
<dbReference type="InterPro" id="IPR037191">
    <property type="entry name" value="VPS9_dom_sf"/>
</dbReference>
<dbReference type="PANTHER" id="PTHR24170">
    <property type="entry name" value="ANKYRIN REPEAT DOMAIN-CONTAINING PROTEIN 27"/>
    <property type="match status" value="1"/>
</dbReference>
<dbReference type="PANTHER" id="PTHR24170:SF1">
    <property type="entry name" value="DOMAIN PROTEIN, PUTATIVE (AFU_ORTHOLOGUE AFUA_1G09870)-RELATED"/>
    <property type="match status" value="1"/>
</dbReference>
<dbReference type="Pfam" id="PF02204">
    <property type="entry name" value="VPS9"/>
    <property type="match status" value="1"/>
</dbReference>
<dbReference type="SUPFAM" id="SSF48403">
    <property type="entry name" value="Ankyrin repeat"/>
    <property type="match status" value="1"/>
</dbReference>
<dbReference type="SUPFAM" id="SSF109993">
    <property type="entry name" value="VPS9 domain"/>
    <property type="match status" value="1"/>
</dbReference>
<dbReference type="PROSITE" id="PS51205">
    <property type="entry name" value="VPS9"/>
    <property type="match status" value="1"/>
</dbReference>
<evidence type="ECO:0000255" key="1">
    <source>
        <dbReference type="PROSITE-ProRule" id="PRU00550"/>
    </source>
</evidence>
<evidence type="ECO:0000305" key="2"/>
<reference key="1">
    <citation type="journal article" date="2009" name="Nature">
        <title>Evolution of pathogenicity and sexual reproduction in eight Candida genomes.</title>
        <authorList>
            <person name="Butler G."/>
            <person name="Rasmussen M.D."/>
            <person name="Lin M.F."/>
            <person name="Santos M.A.S."/>
            <person name="Sakthikumar S."/>
            <person name="Munro C.A."/>
            <person name="Rheinbay E."/>
            <person name="Grabherr M."/>
            <person name="Forche A."/>
            <person name="Reedy J.L."/>
            <person name="Agrafioti I."/>
            <person name="Arnaud M.B."/>
            <person name="Bates S."/>
            <person name="Brown A.J.P."/>
            <person name="Brunke S."/>
            <person name="Costanzo M.C."/>
            <person name="Fitzpatrick D.A."/>
            <person name="de Groot P.W.J."/>
            <person name="Harris D."/>
            <person name="Hoyer L.L."/>
            <person name="Hube B."/>
            <person name="Klis F.M."/>
            <person name="Kodira C."/>
            <person name="Lennard N."/>
            <person name="Logue M.E."/>
            <person name="Martin R."/>
            <person name="Neiman A.M."/>
            <person name="Nikolaou E."/>
            <person name="Quail M.A."/>
            <person name="Quinn J."/>
            <person name="Santos M.C."/>
            <person name="Schmitzberger F.F."/>
            <person name="Sherlock G."/>
            <person name="Shah P."/>
            <person name="Silverstein K.A.T."/>
            <person name="Skrzypek M.S."/>
            <person name="Soll D."/>
            <person name="Staggs R."/>
            <person name="Stansfield I."/>
            <person name="Stumpf M.P.H."/>
            <person name="Sudbery P.E."/>
            <person name="Srikantha T."/>
            <person name="Zeng Q."/>
            <person name="Berman J."/>
            <person name="Berriman M."/>
            <person name="Heitman J."/>
            <person name="Gow N.A.R."/>
            <person name="Lorenz M.C."/>
            <person name="Birren B.W."/>
            <person name="Kellis M."/>
            <person name="Cuomo C.A."/>
        </authorList>
    </citation>
    <scope>NUCLEOTIDE SEQUENCE [LARGE SCALE GENOMIC DNA]</scope>
    <source>
        <strain>ATCC 11503 / BCRC 21390 / CBS 2605 / JCM 1781 / NBRC 1676 / NRRL YB-4239</strain>
    </source>
</reference>